<name>ITPK2_ARATH</name>
<feature type="chain" id="PRO_0000220841" description="Inositol-tetrakisphosphate 1-kinase 2">
    <location>
        <begin position="1"/>
        <end position="391"/>
    </location>
</feature>
<feature type="domain" description="ATP-grasp">
    <location>
        <begin position="178"/>
        <end position="384"/>
    </location>
</feature>
<feature type="binding site" evidence="2">
    <location>
        <position position="90"/>
    </location>
    <ligand>
        <name>1D-myo-inositol 1,3,4-trisphosphate</name>
        <dbReference type="ChEBI" id="CHEBI:58414"/>
    </ligand>
</feature>
<feature type="binding site" evidence="2">
    <location>
        <position position="132"/>
    </location>
    <ligand>
        <name>1D-myo-inositol 1,3,4-trisphosphate</name>
        <dbReference type="ChEBI" id="CHEBI:58414"/>
    </ligand>
</feature>
<feature type="binding site" evidence="1">
    <location>
        <position position="167"/>
    </location>
    <ligand>
        <name>ATP</name>
        <dbReference type="ChEBI" id="CHEBI:30616"/>
    </ligand>
</feature>
<feature type="binding site" evidence="1">
    <location>
        <position position="217"/>
    </location>
    <ligand>
        <name>ATP</name>
        <dbReference type="ChEBI" id="CHEBI:30616"/>
    </ligand>
</feature>
<feature type="binding site" evidence="2">
    <location>
        <position position="228"/>
    </location>
    <ligand>
        <name>1D-myo-inositol 1,3,4-trisphosphate</name>
        <dbReference type="ChEBI" id="CHEBI:58414"/>
    </ligand>
</feature>
<feature type="binding site" evidence="1">
    <location>
        <begin position="249"/>
        <end position="260"/>
    </location>
    <ligand>
        <name>ATP</name>
        <dbReference type="ChEBI" id="CHEBI:30616"/>
    </ligand>
</feature>
<feature type="binding site" evidence="2">
    <location>
        <position position="260"/>
    </location>
    <ligand>
        <name>1D-myo-inositol 1,3,4-trisphosphate</name>
        <dbReference type="ChEBI" id="CHEBI:58414"/>
    </ligand>
</feature>
<feature type="binding site" evidence="1">
    <location>
        <position position="275"/>
    </location>
    <ligand>
        <name>ATP</name>
        <dbReference type="ChEBI" id="CHEBI:30616"/>
    </ligand>
</feature>
<feature type="binding site" evidence="1">
    <location>
        <position position="340"/>
    </location>
    <ligand>
        <name>Mg(2+)</name>
        <dbReference type="ChEBI" id="CHEBI:18420"/>
        <label>1</label>
    </ligand>
</feature>
<feature type="binding site" evidence="1">
    <location>
        <position position="355"/>
    </location>
    <ligand>
        <name>Mg(2+)</name>
        <dbReference type="ChEBI" id="CHEBI:18420"/>
        <label>1</label>
    </ligand>
</feature>
<feature type="binding site" evidence="1">
    <location>
        <position position="355"/>
    </location>
    <ligand>
        <name>Mg(2+)</name>
        <dbReference type="ChEBI" id="CHEBI:18420"/>
        <label>2</label>
    </ligand>
</feature>
<feature type="binding site" evidence="2">
    <location>
        <position position="357"/>
    </location>
    <ligand>
        <name>1D-myo-inositol 1,3,4-trisphosphate</name>
        <dbReference type="ChEBI" id="CHEBI:58414"/>
    </ligand>
</feature>
<feature type="binding site" evidence="1">
    <location>
        <position position="357"/>
    </location>
    <ligand>
        <name>Mg(2+)</name>
        <dbReference type="ChEBI" id="CHEBI:18420"/>
        <label>2</label>
    </ligand>
</feature>
<proteinExistence type="evidence at protein level"/>
<dbReference type="EC" id="2.7.1.134" evidence="3"/>
<dbReference type="EC" id="2.7.1.159" evidence="3"/>
<dbReference type="EMBL" id="AL031394">
    <property type="protein sequence ID" value="CAA20590.1"/>
    <property type="status" value="ALT_SEQ"/>
    <property type="molecule type" value="Genomic_DNA"/>
</dbReference>
<dbReference type="EMBL" id="AL161584">
    <property type="protein sequence ID" value="CAB80094.1"/>
    <property type="status" value="ALT_SEQ"/>
    <property type="molecule type" value="Genomic_DNA"/>
</dbReference>
<dbReference type="EMBL" id="CP002687">
    <property type="protein sequence ID" value="AEE86275.1"/>
    <property type="molecule type" value="Genomic_DNA"/>
</dbReference>
<dbReference type="EMBL" id="BT029235">
    <property type="protein sequence ID" value="ABJ98567.1"/>
    <property type="molecule type" value="mRNA"/>
</dbReference>
<dbReference type="PIR" id="T04994">
    <property type="entry name" value="T04994"/>
</dbReference>
<dbReference type="RefSeq" id="NP_195103.3">
    <molecule id="O81893-1"/>
    <property type="nucleotide sequence ID" value="NM_119535.5"/>
</dbReference>
<dbReference type="SMR" id="O81893"/>
<dbReference type="BioGRID" id="14801">
    <property type="interactions" value="1"/>
</dbReference>
<dbReference type="FunCoup" id="O81893">
    <property type="interactions" value="562"/>
</dbReference>
<dbReference type="IntAct" id="O81893">
    <property type="interactions" value="1"/>
</dbReference>
<dbReference type="STRING" id="3702.O81893"/>
<dbReference type="iPTMnet" id="O81893"/>
<dbReference type="PaxDb" id="3702-AT4G33770.1"/>
<dbReference type="ProteomicsDB" id="238958">
    <molecule id="O81893-1"/>
</dbReference>
<dbReference type="EnsemblPlants" id="AT4G33770.1">
    <molecule id="O81893-1"/>
    <property type="protein sequence ID" value="AT4G33770.1"/>
    <property type="gene ID" value="AT4G33770"/>
</dbReference>
<dbReference type="GeneID" id="829519"/>
<dbReference type="Gramene" id="AT4G33770.1">
    <molecule id="O81893-1"/>
    <property type="protein sequence ID" value="AT4G33770.1"/>
    <property type="gene ID" value="AT4G33770"/>
</dbReference>
<dbReference type="KEGG" id="ath:AT4G33770"/>
<dbReference type="Araport" id="AT4G33770"/>
<dbReference type="TAIR" id="AT4G33770">
    <property type="gene designation" value="ITPK2"/>
</dbReference>
<dbReference type="eggNOG" id="ENOG502QQS1">
    <property type="taxonomic scope" value="Eukaryota"/>
</dbReference>
<dbReference type="HOGENOM" id="CLU_041857_0_0_1"/>
<dbReference type="InParanoid" id="O81893"/>
<dbReference type="OMA" id="SAIVHKM"/>
<dbReference type="PhylomeDB" id="O81893"/>
<dbReference type="BioCyc" id="ARA:AT4G33770-MONOMER"/>
<dbReference type="BRENDA" id="2.7.1.134">
    <property type="organism ID" value="399"/>
</dbReference>
<dbReference type="BRENDA" id="2.7.1.159">
    <property type="organism ID" value="399"/>
</dbReference>
<dbReference type="PRO" id="PR:O81893"/>
<dbReference type="Proteomes" id="UP000006548">
    <property type="component" value="Chromosome 4"/>
</dbReference>
<dbReference type="ExpressionAtlas" id="O81893">
    <property type="expression patterns" value="baseline and differential"/>
</dbReference>
<dbReference type="GO" id="GO:0005524">
    <property type="term" value="F:ATP binding"/>
    <property type="evidence" value="ECO:0007669"/>
    <property type="project" value="UniProtKB-KW"/>
</dbReference>
<dbReference type="GO" id="GO:0052726">
    <property type="term" value="F:inositol-1,3,4-trisphosphate 5-kinase activity"/>
    <property type="evidence" value="ECO:0000314"/>
    <property type="project" value="UniProtKB"/>
</dbReference>
<dbReference type="GO" id="GO:0052725">
    <property type="term" value="F:inositol-1,3,4-trisphosphate 6-kinase activity"/>
    <property type="evidence" value="ECO:0000314"/>
    <property type="project" value="UniProtKB"/>
</dbReference>
<dbReference type="GO" id="GO:0047325">
    <property type="term" value="F:inositol-3,4,5,6-tetrakisphosphate 1-kinase activity"/>
    <property type="evidence" value="ECO:0000314"/>
    <property type="project" value="UniProtKB"/>
</dbReference>
<dbReference type="GO" id="GO:0000287">
    <property type="term" value="F:magnesium ion binding"/>
    <property type="evidence" value="ECO:0007669"/>
    <property type="project" value="InterPro"/>
</dbReference>
<dbReference type="GO" id="GO:0032957">
    <property type="term" value="P:inositol trisphosphate metabolic process"/>
    <property type="evidence" value="ECO:0007669"/>
    <property type="project" value="InterPro"/>
</dbReference>
<dbReference type="GO" id="GO:0010214">
    <property type="term" value="P:seed coat development"/>
    <property type="evidence" value="ECO:0000315"/>
    <property type="project" value="UniProtKB"/>
</dbReference>
<dbReference type="Gene3D" id="3.30.470.20">
    <property type="entry name" value="ATP-grasp fold, B domain"/>
    <property type="match status" value="1"/>
</dbReference>
<dbReference type="InterPro" id="IPR008656">
    <property type="entry name" value="Inositol_tetrakis-P_1-kinase"/>
</dbReference>
<dbReference type="InterPro" id="IPR040464">
    <property type="entry name" value="InsP(3)kin_ATP-grasp"/>
</dbReference>
<dbReference type="InterPro" id="IPR041429">
    <property type="entry name" value="ITPK1_N"/>
</dbReference>
<dbReference type="PANTHER" id="PTHR14217">
    <property type="entry name" value="INOSITOL-TETRAKISPHOSPHATE 1-KINASE"/>
    <property type="match status" value="1"/>
</dbReference>
<dbReference type="PANTHER" id="PTHR14217:SF19">
    <property type="entry name" value="INOSITOL-TETRAKISPHOSPHATE 1-KINASE 2"/>
    <property type="match status" value="1"/>
</dbReference>
<dbReference type="Pfam" id="PF05770">
    <property type="entry name" value="Ins134_P3_kin"/>
    <property type="match status" value="1"/>
</dbReference>
<dbReference type="Pfam" id="PF17927">
    <property type="entry name" value="Ins134_P3_kin_N"/>
    <property type="match status" value="1"/>
</dbReference>
<dbReference type="SUPFAM" id="SSF56059">
    <property type="entry name" value="Glutathione synthetase ATP-binding domain-like"/>
    <property type="match status" value="1"/>
</dbReference>
<protein>
    <recommendedName>
        <fullName>Inositol-tetrakisphosphate 1-kinase 2</fullName>
        <ecNumber evidence="3">2.7.1.134</ecNumber>
    </recommendedName>
    <alternativeName>
        <fullName>Inositol 1,3,4-trisphosphate 5/6-kinase 2</fullName>
        <shortName>AtItpk-2</shortName>
        <shortName>Inositol-triphosphate 5/6-kinase 2</shortName>
        <shortName>Ins(1,3,4)P(3) 5/6-kinase 2</shortName>
        <ecNumber evidence="3">2.7.1.159</ecNumber>
    </alternativeName>
</protein>
<sequence>MFGTLASGEIETARLNRNLGITSNLGVSCGGFEDFAMRFEGENMVPYKGEEQEEEEDQVVVNETTPFQFQQPLFLQQQQKLVVGYALTSKKKKSFLQPKLELLARRKGIFFVAIDLNRPLSEQGPFDVVLHKLLGKEWEEVIEDYQQKHPEVTVLDPPGSIQRIYNRQSMLQGMADLKLSDCSGSLFVPKQMVVLKDSAASADAVVEAGLKFPLVAKPLWIDGTAKSHQLYLAYDRRSLAELDPPLVLQEFVNHGGVMFKVFVVGDVIKVMRRFSLPNVSNCEKAKVDGVFQFPRVSSAAASADNADLDPRVAELPPKPFLEALVKELRSLLGLRLFNIDMIREHGSKNVFYVIDINYFPGYGKLPDYEQVFVDFFQNLAQVKYKKRQHCK</sequence>
<accession>O81893</accession>
<accession>Q058I3</accession>
<organism>
    <name type="scientific">Arabidopsis thaliana</name>
    <name type="common">Mouse-ear cress</name>
    <dbReference type="NCBI Taxonomy" id="3702"/>
    <lineage>
        <taxon>Eukaryota</taxon>
        <taxon>Viridiplantae</taxon>
        <taxon>Streptophyta</taxon>
        <taxon>Embryophyta</taxon>
        <taxon>Tracheophyta</taxon>
        <taxon>Spermatophyta</taxon>
        <taxon>Magnoliopsida</taxon>
        <taxon>eudicotyledons</taxon>
        <taxon>Gunneridae</taxon>
        <taxon>Pentapetalae</taxon>
        <taxon>rosids</taxon>
        <taxon>malvids</taxon>
        <taxon>Brassicales</taxon>
        <taxon>Brassicaceae</taxon>
        <taxon>Camelineae</taxon>
        <taxon>Arabidopsis</taxon>
    </lineage>
</organism>
<reference key="1">
    <citation type="journal article" date="1999" name="Nature">
        <title>Sequence and analysis of chromosome 4 of the plant Arabidopsis thaliana.</title>
        <authorList>
            <person name="Mayer K.F.X."/>
            <person name="Schueller C."/>
            <person name="Wambutt R."/>
            <person name="Murphy G."/>
            <person name="Volckaert G."/>
            <person name="Pohl T."/>
            <person name="Duesterhoeft A."/>
            <person name="Stiekema W."/>
            <person name="Entian K.-D."/>
            <person name="Terryn N."/>
            <person name="Harris B."/>
            <person name="Ansorge W."/>
            <person name="Brandt P."/>
            <person name="Grivell L.A."/>
            <person name="Rieger M."/>
            <person name="Weichselgartner M."/>
            <person name="de Simone V."/>
            <person name="Obermaier B."/>
            <person name="Mache R."/>
            <person name="Mueller M."/>
            <person name="Kreis M."/>
            <person name="Delseny M."/>
            <person name="Puigdomenech P."/>
            <person name="Watson M."/>
            <person name="Schmidtheini T."/>
            <person name="Reichert B."/>
            <person name="Portetelle D."/>
            <person name="Perez-Alonso M."/>
            <person name="Boutry M."/>
            <person name="Bancroft I."/>
            <person name="Vos P."/>
            <person name="Hoheisel J."/>
            <person name="Zimmermann W."/>
            <person name="Wedler H."/>
            <person name="Ridley P."/>
            <person name="Langham S.-A."/>
            <person name="McCullagh B."/>
            <person name="Bilham L."/>
            <person name="Robben J."/>
            <person name="van der Schueren J."/>
            <person name="Grymonprez B."/>
            <person name="Chuang Y.-J."/>
            <person name="Vandenbussche F."/>
            <person name="Braeken M."/>
            <person name="Weltjens I."/>
            <person name="Voet M."/>
            <person name="Bastiaens I."/>
            <person name="Aert R."/>
            <person name="Defoor E."/>
            <person name="Weitzenegger T."/>
            <person name="Bothe G."/>
            <person name="Ramsperger U."/>
            <person name="Hilbert H."/>
            <person name="Braun M."/>
            <person name="Holzer E."/>
            <person name="Brandt A."/>
            <person name="Peters S."/>
            <person name="van Staveren M."/>
            <person name="Dirkse W."/>
            <person name="Mooijman P."/>
            <person name="Klein Lankhorst R."/>
            <person name="Rose M."/>
            <person name="Hauf J."/>
            <person name="Koetter P."/>
            <person name="Berneiser S."/>
            <person name="Hempel S."/>
            <person name="Feldpausch M."/>
            <person name="Lamberth S."/>
            <person name="Van den Daele H."/>
            <person name="De Keyser A."/>
            <person name="Buysshaert C."/>
            <person name="Gielen J."/>
            <person name="Villarroel R."/>
            <person name="De Clercq R."/>
            <person name="van Montagu M."/>
            <person name="Rogers J."/>
            <person name="Cronin A."/>
            <person name="Quail M.A."/>
            <person name="Bray-Allen S."/>
            <person name="Clark L."/>
            <person name="Doggett J."/>
            <person name="Hall S."/>
            <person name="Kay M."/>
            <person name="Lennard N."/>
            <person name="McLay K."/>
            <person name="Mayes R."/>
            <person name="Pettett A."/>
            <person name="Rajandream M.A."/>
            <person name="Lyne M."/>
            <person name="Benes V."/>
            <person name="Rechmann S."/>
            <person name="Borkova D."/>
            <person name="Bloecker H."/>
            <person name="Scharfe M."/>
            <person name="Grimm M."/>
            <person name="Loehnert T.-H."/>
            <person name="Dose S."/>
            <person name="de Haan M."/>
            <person name="Maarse A.C."/>
            <person name="Schaefer M."/>
            <person name="Mueller-Auer S."/>
            <person name="Gabel C."/>
            <person name="Fuchs M."/>
            <person name="Fartmann B."/>
            <person name="Granderath K."/>
            <person name="Dauner D."/>
            <person name="Herzl A."/>
            <person name="Neumann S."/>
            <person name="Argiriou A."/>
            <person name="Vitale D."/>
            <person name="Liguori R."/>
            <person name="Piravandi E."/>
            <person name="Massenet O."/>
            <person name="Quigley F."/>
            <person name="Clabauld G."/>
            <person name="Muendlein A."/>
            <person name="Felber R."/>
            <person name="Schnabl S."/>
            <person name="Hiller R."/>
            <person name="Schmidt W."/>
            <person name="Lecharny A."/>
            <person name="Aubourg S."/>
            <person name="Chefdor F."/>
            <person name="Cooke R."/>
            <person name="Berger C."/>
            <person name="Monfort A."/>
            <person name="Casacuberta E."/>
            <person name="Gibbons T."/>
            <person name="Weber N."/>
            <person name="Vandenbol M."/>
            <person name="Bargues M."/>
            <person name="Terol J."/>
            <person name="Torres A."/>
            <person name="Perez-Perez A."/>
            <person name="Purnelle B."/>
            <person name="Bent E."/>
            <person name="Johnson S."/>
            <person name="Tacon D."/>
            <person name="Jesse T."/>
            <person name="Heijnen L."/>
            <person name="Schwarz S."/>
            <person name="Scholler P."/>
            <person name="Heber S."/>
            <person name="Francs P."/>
            <person name="Bielke C."/>
            <person name="Frishman D."/>
            <person name="Haase D."/>
            <person name="Lemcke K."/>
            <person name="Mewes H.-W."/>
            <person name="Stocker S."/>
            <person name="Zaccaria P."/>
            <person name="Bevan M."/>
            <person name="Wilson R.K."/>
            <person name="de la Bastide M."/>
            <person name="Habermann K."/>
            <person name="Parnell L."/>
            <person name="Dedhia N."/>
            <person name="Gnoj L."/>
            <person name="Schutz K."/>
            <person name="Huang E."/>
            <person name="Spiegel L."/>
            <person name="Sekhon M."/>
            <person name="Murray J."/>
            <person name="Sheet P."/>
            <person name="Cordes M."/>
            <person name="Abu-Threideh J."/>
            <person name="Stoneking T."/>
            <person name="Kalicki J."/>
            <person name="Graves T."/>
            <person name="Harmon G."/>
            <person name="Edwards J."/>
            <person name="Latreille P."/>
            <person name="Courtney L."/>
            <person name="Cloud J."/>
            <person name="Abbott A."/>
            <person name="Scott K."/>
            <person name="Johnson D."/>
            <person name="Minx P."/>
            <person name="Bentley D."/>
            <person name="Fulton B."/>
            <person name="Miller N."/>
            <person name="Greco T."/>
            <person name="Kemp K."/>
            <person name="Kramer J."/>
            <person name="Fulton L."/>
            <person name="Mardis E."/>
            <person name="Dante M."/>
            <person name="Pepin K."/>
            <person name="Hillier L.W."/>
            <person name="Nelson J."/>
            <person name="Spieth J."/>
            <person name="Ryan E."/>
            <person name="Andrews S."/>
            <person name="Geisel C."/>
            <person name="Layman D."/>
            <person name="Du H."/>
            <person name="Ali J."/>
            <person name="Berghoff A."/>
            <person name="Jones K."/>
            <person name="Drone K."/>
            <person name="Cotton M."/>
            <person name="Joshu C."/>
            <person name="Antonoiu B."/>
            <person name="Zidanic M."/>
            <person name="Strong C."/>
            <person name="Sun H."/>
            <person name="Lamar B."/>
            <person name="Yordan C."/>
            <person name="Ma P."/>
            <person name="Zhong J."/>
            <person name="Preston R."/>
            <person name="Vil D."/>
            <person name="Shekher M."/>
            <person name="Matero A."/>
            <person name="Shah R."/>
            <person name="Swaby I.K."/>
            <person name="O'Shaughnessy A."/>
            <person name="Rodriguez M."/>
            <person name="Hoffman J."/>
            <person name="Till S."/>
            <person name="Granat S."/>
            <person name="Shohdy N."/>
            <person name="Hasegawa A."/>
            <person name="Hameed A."/>
            <person name="Lodhi M."/>
            <person name="Johnson A."/>
            <person name="Chen E."/>
            <person name="Marra M.A."/>
            <person name="Martienssen R."/>
            <person name="McCombie W.R."/>
        </authorList>
    </citation>
    <scope>NUCLEOTIDE SEQUENCE [LARGE SCALE GENOMIC DNA]</scope>
    <source>
        <strain>cv. Columbia</strain>
    </source>
</reference>
<reference key="2">
    <citation type="journal article" date="2017" name="Plant J.">
        <title>Araport11: a complete reannotation of the Arabidopsis thaliana reference genome.</title>
        <authorList>
            <person name="Cheng C.Y."/>
            <person name="Krishnakumar V."/>
            <person name="Chan A.P."/>
            <person name="Thibaud-Nissen F."/>
            <person name="Schobel S."/>
            <person name="Town C.D."/>
        </authorList>
    </citation>
    <scope>GENOME REANNOTATION</scope>
    <source>
        <strain>cv. Columbia</strain>
    </source>
</reference>
<reference key="3">
    <citation type="submission" date="2006-10" db="EMBL/GenBank/DDBJ databases">
        <title>Arabidopsis ORF clones.</title>
        <authorList>
            <person name="Quinitio C."/>
            <person name="Chen H."/>
            <person name="Kim C.J."/>
            <person name="Shinn P."/>
            <person name="Ecker J.R."/>
        </authorList>
    </citation>
    <scope>NUCLEOTIDE SEQUENCE [LARGE SCALE MRNA]</scope>
    <source>
        <strain>cv. Columbia</strain>
    </source>
</reference>
<reference key="4">
    <citation type="journal article" date="2007" name="FEBS Lett.">
        <title>Arabidopsis thaliana inositol 1,3,4-trisphosphate 5/6-kinase 4 (AtITPK4) is an outlier to a family of ATP-grasp fold proteins from Arabidopsis.</title>
        <authorList>
            <person name="Sweetman D."/>
            <person name="Stavridou I."/>
            <person name="Johnson S."/>
            <person name="Green P."/>
            <person name="Caddick S.E."/>
            <person name="Brearley C.A."/>
        </authorList>
    </citation>
    <scope>FUNCTION</scope>
    <scope>CATALYTIC ACTIVITY</scope>
    <scope>TISSUE SPECIFICITY</scope>
</reference>
<reference key="5">
    <citation type="journal article" date="2013" name="Acta Biochim. Biophys. Sin.">
        <title>Arabidopsis inositol 1,3,4-trisphosphate 5/6 kinase 2 is required for seed coat development.</title>
        <authorList>
            <person name="Tang Y."/>
            <person name="Tan S."/>
            <person name="Xue H."/>
        </authorList>
    </citation>
    <scope>FUNCTION</scope>
    <scope>TISSUE SPECIFICITY</scope>
    <scope>DEVELOPMENTAL STAGE</scope>
    <scope>DISRUPTION PHENOTYPE</scope>
</reference>
<keyword id="KW-0025">Alternative splicing</keyword>
<keyword id="KW-0067">ATP-binding</keyword>
<keyword id="KW-0418">Kinase</keyword>
<keyword id="KW-0460">Magnesium</keyword>
<keyword id="KW-0479">Metal-binding</keyword>
<keyword id="KW-0547">Nucleotide-binding</keyword>
<keyword id="KW-1185">Reference proteome</keyword>
<keyword id="KW-0808">Transferase</keyword>
<gene>
    <name type="primary">ITPK2</name>
    <name type="ordered locus">At4g33770</name>
    <name type="ORF">T16L1.260</name>
</gene>
<evidence type="ECO:0000250" key="1">
    <source>
        <dbReference type="UniProtKB" id="Q13572"/>
    </source>
</evidence>
<evidence type="ECO:0000250" key="2">
    <source>
        <dbReference type="UniProtKB" id="Q9XYQ1"/>
    </source>
</evidence>
<evidence type="ECO:0000269" key="3">
    <source>
    </source>
</evidence>
<evidence type="ECO:0000269" key="4">
    <source>
    </source>
</evidence>
<evidence type="ECO:0000305" key="5"/>
<comment type="function">
    <text evidence="1 3 4">Kinase that can phosphorylate various inositol polyphosphate such as Ins(3,4,5,6)P4 or Ins(1,3,4)P3. Phosphorylates Ins(3,4,5,6)P4 to form InsP5 (PubMed:17698066). This reaction is thought to have regulatory importance, since Ins(3,4,5,6)P4 is an inhibitor of plasma membrane Ca(2+)-activated Cl(-) channels, while Ins(1,3,4,5,6)P5 is not (By similarity). Also phosphorylates Ins(1,3,4)P3 or a racemic mixture of Ins(1,4,6)P3 and Ins(3,4,6)P3 to form InsP4 (PubMed:17698066). Ins(1,3,4,6)P4 is an essential molecule in the hexakisphosphate (InsP6) pathway (By similarity). Plays a role in seed coat development and lipid polyester barrier formation (PubMed:23595027).</text>
</comment>
<comment type="catalytic activity">
    <reaction evidence="3">
        <text>1D-myo-inositol 3,4,5,6-tetrakisphosphate + ATP = 1D-myo-inositol 1,3,4,5,6-pentakisphosphate + ADP + H(+)</text>
        <dbReference type="Rhea" id="RHEA:12452"/>
        <dbReference type="ChEBI" id="CHEBI:15378"/>
        <dbReference type="ChEBI" id="CHEBI:30616"/>
        <dbReference type="ChEBI" id="CHEBI:57539"/>
        <dbReference type="ChEBI" id="CHEBI:57733"/>
        <dbReference type="ChEBI" id="CHEBI:456216"/>
        <dbReference type="EC" id="2.7.1.134"/>
    </reaction>
</comment>
<comment type="catalytic activity">
    <reaction evidence="3">
        <text>1D-myo-inositol 1,3,4-trisphosphate + ATP = 1D-myo-inositol 1,3,4,5-tetrakisphosphate + ADP + H(+)</text>
        <dbReference type="Rhea" id="RHEA:13253"/>
        <dbReference type="ChEBI" id="CHEBI:15378"/>
        <dbReference type="ChEBI" id="CHEBI:30616"/>
        <dbReference type="ChEBI" id="CHEBI:57895"/>
        <dbReference type="ChEBI" id="CHEBI:58414"/>
        <dbReference type="ChEBI" id="CHEBI:456216"/>
        <dbReference type="EC" id="2.7.1.159"/>
    </reaction>
</comment>
<comment type="catalytic activity">
    <reaction evidence="3">
        <text>1D-myo-inositol 1,3,4-trisphosphate + ATP = 1D-myo-inositol 1,3,4,6-tetrakisphosphate + ADP + H(+)</text>
        <dbReference type="Rhea" id="RHEA:20940"/>
        <dbReference type="ChEBI" id="CHEBI:15378"/>
        <dbReference type="ChEBI" id="CHEBI:30616"/>
        <dbReference type="ChEBI" id="CHEBI:57660"/>
        <dbReference type="ChEBI" id="CHEBI:58414"/>
        <dbReference type="ChEBI" id="CHEBI:456216"/>
        <dbReference type="EC" id="2.7.1.159"/>
    </reaction>
</comment>
<comment type="cofactor">
    <cofactor evidence="1">
        <name>Mg(2+)</name>
        <dbReference type="ChEBI" id="CHEBI:18420"/>
    </cofactor>
    <text evidence="1">Binds 2 magnesium ions per subunit.</text>
</comment>
<comment type="subunit">
    <text evidence="1">Monomer.</text>
</comment>
<comment type="alternative products">
    <event type="alternative splicing"/>
    <isoform>
        <id>O81893-1</id>
        <name>1</name>
        <sequence type="displayed"/>
    </isoform>
    <text>A number of isoforms are produced. According to EST sequences.</text>
</comment>
<comment type="tissue specificity">
    <text evidence="3 4">Expressed in seedling roots, cotyledons, rosette leaves, cauline leaves, stems, flowers, siliques and seeds.</text>
</comment>
<comment type="developmental stage">
    <text evidence="4">Expressed in the seed coat of developing seeds from 2 to 6 days after fertilization.</text>
</comment>
<comment type="disruption phenotype">
    <text evidence="4">Distorted seed coat with reduced mucilage content and decreased suberin and cutin composition. Crumpled columellas.</text>
</comment>
<comment type="similarity">
    <text evidence="5">Belongs to the ITPK1 family.</text>
</comment>
<comment type="sequence caution" evidence="5">
    <conflict type="erroneous gene model prediction">
        <sequence resource="EMBL-CDS" id="CAA20590"/>
    </conflict>
</comment>
<comment type="sequence caution" evidence="5">
    <conflict type="erroneous gene model prediction">
        <sequence resource="EMBL-CDS" id="CAB80094"/>
    </conflict>
</comment>